<evidence type="ECO:0000250" key="1"/>
<evidence type="ECO:0000250" key="2">
    <source>
        <dbReference type="UniProtKB" id="A4D1S5"/>
    </source>
</evidence>
<evidence type="ECO:0000250" key="3">
    <source>
        <dbReference type="UniProtKB" id="Q9H0U4"/>
    </source>
</evidence>
<evidence type="ECO:0000305" key="4"/>
<proteinExistence type="evidence at transcript level"/>
<name>RAB19_XENLA</name>
<feature type="chain" id="PRO_0000366947" description="Ras-related protein Rab-19">
    <location>
        <begin position="1"/>
        <end position="213"/>
    </location>
</feature>
<feature type="short sequence motif" description="Switch 1" evidence="3">
    <location>
        <begin position="37"/>
        <end position="52"/>
    </location>
</feature>
<feature type="short sequence motif" description="Switch 2" evidence="3">
    <location>
        <begin position="72"/>
        <end position="87"/>
    </location>
</feature>
<feature type="binding site" evidence="3">
    <location>
        <position position="24"/>
    </location>
    <ligand>
        <name>GTP</name>
        <dbReference type="ChEBI" id="CHEBI:37565"/>
    </ligand>
</feature>
<feature type="binding site" evidence="3">
    <location>
        <position position="26"/>
    </location>
    <ligand>
        <name>GTP</name>
        <dbReference type="ChEBI" id="CHEBI:37565"/>
    </ligand>
</feature>
<feature type="binding site" evidence="3">
    <location>
        <position position="27"/>
    </location>
    <ligand>
        <name>GTP</name>
        <dbReference type="ChEBI" id="CHEBI:37565"/>
    </ligand>
</feature>
<feature type="binding site" evidence="3">
    <location>
        <position position="28"/>
    </location>
    <ligand>
        <name>GTP</name>
        <dbReference type="ChEBI" id="CHEBI:37565"/>
    </ligand>
</feature>
<feature type="binding site" evidence="3">
    <location>
        <position position="29"/>
    </location>
    <ligand>
        <name>GTP</name>
        <dbReference type="ChEBI" id="CHEBI:37565"/>
    </ligand>
</feature>
<feature type="binding site" evidence="3">
    <location>
        <position position="29"/>
    </location>
    <ligand>
        <name>Mg(2+)</name>
        <dbReference type="ChEBI" id="CHEBI:18420"/>
    </ligand>
</feature>
<feature type="binding site" evidence="3">
    <location>
        <position position="30"/>
    </location>
    <ligand>
        <name>GTP</name>
        <dbReference type="ChEBI" id="CHEBI:37565"/>
    </ligand>
</feature>
<feature type="binding site" evidence="3">
    <location>
        <position position="42"/>
    </location>
    <ligand>
        <name>GTP</name>
        <dbReference type="ChEBI" id="CHEBI:37565"/>
    </ligand>
</feature>
<feature type="binding site" evidence="3">
    <location>
        <position position="47"/>
    </location>
    <ligand>
        <name>GTP</name>
        <dbReference type="ChEBI" id="CHEBI:37565"/>
    </ligand>
</feature>
<feature type="binding site" evidence="3">
    <location>
        <position position="47"/>
    </location>
    <ligand>
        <name>Mg(2+)</name>
        <dbReference type="ChEBI" id="CHEBI:18420"/>
    </ligand>
</feature>
<feature type="binding site" evidence="3">
    <location>
        <position position="70"/>
    </location>
    <ligand>
        <name>Mg(2+)</name>
        <dbReference type="ChEBI" id="CHEBI:18420"/>
    </ligand>
</feature>
<feature type="binding site" evidence="3">
    <location>
        <position position="73"/>
    </location>
    <ligand>
        <name>GTP</name>
        <dbReference type="ChEBI" id="CHEBI:37565"/>
    </ligand>
</feature>
<feature type="binding site" evidence="3">
    <location>
        <position position="128"/>
    </location>
    <ligand>
        <name>GTP</name>
        <dbReference type="ChEBI" id="CHEBI:37565"/>
    </ligand>
</feature>
<feature type="binding site" evidence="3">
    <location>
        <position position="129"/>
    </location>
    <ligand>
        <name>GTP</name>
        <dbReference type="ChEBI" id="CHEBI:37565"/>
    </ligand>
</feature>
<feature type="binding site" evidence="3">
    <location>
        <position position="131"/>
    </location>
    <ligand>
        <name>GTP</name>
        <dbReference type="ChEBI" id="CHEBI:37565"/>
    </ligand>
</feature>
<feature type="binding site" evidence="3">
    <location>
        <position position="159"/>
    </location>
    <ligand>
        <name>GTP</name>
        <dbReference type="ChEBI" id="CHEBI:37565"/>
    </ligand>
</feature>
<feature type="binding site" evidence="3">
    <location>
        <position position="160"/>
    </location>
    <ligand>
        <name>GTP</name>
        <dbReference type="ChEBI" id="CHEBI:37565"/>
    </ligand>
</feature>
<feature type="binding site" evidence="3">
    <location>
        <position position="161"/>
    </location>
    <ligand>
        <name>GTP</name>
        <dbReference type="ChEBI" id="CHEBI:37565"/>
    </ligand>
</feature>
<feature type="modified residue" description="Cysteine methyl ester" evidence="1">
    <location>
        <position position="213"/>
    </location>
</feature>
<feature type="lipid moiety-binding region" description="S-geranylgeranyl cysteine" evidence="1">
    <location>
        <position position="211"/>
    </location>
</feature>
<feature type="lipid moiety-binding region" description="S-geranylgeranyl cysteine" evidence="1">
    <location>
        <position position="213"/>
    </location>
</feature>
<reference key="1">
    <citation type="submission" date="2005-11" db="EMBL/GenBank/DDBJ databases">
        <authorList>
            <consortium name="NIH - Xenopus Gene Collection (XGC) project"/>
        </authorList>
    </citation>
    <scope>NUCLEOTIDE SEQUENCE [LARGE SCALE MRNA]</scope>
    <source>
        <tissue>Embryo</tissue>
    </source>
</reference>
<accession>Q32NQ0</accession>
<keyword id="KW-1003">Cell membrane</keyword>
<keyword id="KW-0342">GTP-binding</keyword>
<keyword id="KW-0378">Hydrolase</keyword>
<keyword id="KW-0449">Lipoprotein</keyword>
<keyword id="KW-0460">Magnesium</keyword>
<keyword id="KW-0472">Membrane</keyword>
<keyword id="KW-0479">Metal-binding</keyword>
<keyword id="KW-0488">Methylation</keyword>
<keyword id="KW-0547">Nucleotide-binding</keyword>
<keyword id="KW-0636">Prenylation</keyword>
<keyword id="KW-1185">Reference proteome</keyword>
<gene>
    <name type="primary">rab19</name>
</gene>
<dbReference type="EC" id="3.6.5.2" evidence="3"/>
<dbReference type="EMBL" id="BC108532">
    <property type="protein sequence ID" value="AAI08533.1"/>
    <property type="molecule type" value="mRNA"/>
</dbReference>
<dbReference type="RefSeq" id="NP_001090134.1">
    <property type="nucleotide sequence ID" value="NM_001096665.1"/>
</dbReference>
<dbReference type="RefSeq" id="XP_018106767.1">
    <property type="nucleotide sequence ID" value="XM_018251278.1"/>
</dbReference>
<dbReference type="RefSeq" id="XP_018106768.1">
    <property type="nucleotide sequence ID" value="XM_018251279.1"/>
</dbReference>
<dbReference type="RefSeq" id="XP_018106769.1">
    <property type="nucleotide sequence ID" value="XM_018251280.1"/>
</dbReference>
<dbReference type="SMR" id="Q32NQ0"/>
<dbReference type="DNASU" id="735212"/>
<dbReference type="GeneID" id="735212"/>
<dbReference type="KEGG" id="xla:735212"/>
<dbReference type="AGR" id="Xenbase:XB-GENE-6254087"/>
<dbReference type="CTD" id="735212"/>
<dbReference type="Xenbase" id="XB-GENE-6254087">
    <property type="gene designation" value="rab19.L"/>
</dbReference>
<dbReference type="OMA" id="DMWEKRH"/>
<dbReference type="OrthoDB" id="9989112at2759"/>
<dbReference type="Proteomes" id="UP000186698">
    <property type="component" value="Chromosome 3L"/>
</dbReference>
<dbReference type="Bgee" id="735212">
    <property type="expression patterns" value="Expressed in internal ear and 14 other cell types or tissues"/>
</dbReference>
<dbReference type="GO" id="GO:0005794">
    <property type="term" value="C:Golgi apparatus"/>
    <property type="evidence" value="ECO:0000318"/>
    <property type="project" value="GO_Central"/>
</dbReference>
<dbReference type="GO" id="GO:0000139">
    <property type="term" value="C:Golgi membrane"/>
    <property type="evidence" value="ECO:0000318"/>
    <property type="project" value="GO_Central"/>
</dbReference>
<dbReference type="GO" id="GO:0005886">
    <property type="term" value="C:plasma membrane"/>
    <property type="evidence" value="ECO:0007669"/>
    <property type="project" value="UniProtKB-SubCell"/>
</dbReference>
<dbReference type="GO" id="GO:0005525">
    <property type="term" value="F:GTP binding"/>
    <property type="evidence" value="ECO:0000318"/>
    <property type="project" value="GO_Central"/>
</dbReference>
<dbReference type="GO" id="GO:0003924">
    <property type="term" value="F:GTPase activity"/>
    <property type="evidence" value="ECO:0000318"/>
    <property type="project" value="GO_Central"/>
</dbReference>
<dbReference type="GO" id="GO:0016192">
    <property type="term" value="P:vesicle-mediated transport"/>
    <property type="evidence" value="ECO:0000318"/>
    <property type="project" value="GO_Central"/>
</dbReference>
<dbReference type="CDD" id="cd01864">
    <property type="entry name" value="Rab19"/>
    <property type="match status" value="1"/>
</dbReference>
<dbReference type="FunFam" id="3.40.50.300:FF:000887">
    <property type="entry name" value="Ras-related protein Rab-19"/>
    <property type="match status" value="1"/>
</dbReference>
<dbReference type="Gene3D" id="3.40.50.300">
    <property type="entry name" value="P-loop containing nucleotide triphosphate hydrolases"/>
    <property type="match status" value="1"/>
</dbReference>
<dbReference type="InterPro" id="IPR027417">
    <property type="entry name" value="P-loop_NTPase"/>
</dbReference>
<dbReference type="InterPro" id="IPR048040">
    <property type="entry name" value="Rab19/43"/>
</dbReference>
<dbReference type="InterPro" id="IPR050209">
    <property type="entry name" value="Rab_GTPases_membrane_traffic"/>
</dbReference>
<dbReference type="InterPro" id="IPR005225">
    <property type="entry name" value="Small_GTP-bd"/>
</dbReference>
<dbReference type="InterPro" id="IPR001806">
    <property type="entry name" value="Small_GTPase"/>
</dbReference>
<dbReference type="NCBIfam" id="TIGR00231">
    <property type="entry name" value="small_GTP"/>
    <property type="match status" value="1"/>
</dbReference>
<dbReference type="PANTHER" id="PTHR47979">
    <property type="entry name" value="DRAB11-RELATED"/>
    <property type="match status" value="1"/>
</dbReference>
<dbReference type="Pfam" id="PF00071">
    <property type="entry name" value="Ras"/>
    <property type="match status" value="1"/>
</dbReference>
<dbReference type="PRINTS" id="PR00449">
    <property type="entry name" value="RASTRNSFRMNG"/>
</dbReference>
<dbReference type="SMART" id="SM00175">
    <property type="entry name" value="RAB"/>
    <property type="match status" value="1"/>
</dbReference>
<dbReference type="SMART" id="SM00176">
    <property type="entry name" value="RAN"/>
    <property type="match status" value="1"/>
</dbReference>
<dbReference type="SMART" id="SM00173">
    <property type="entry name" value="RAS"/>
    <property type="match status" value="1"/>
</dbReference>
<dbReference type="SMART" id="SM00174">
    <property type="entry name" value="RHO"/>
    <property type="match status" value="1"/>
</dbReference>
<dbReference type="SUPFAM" id="SSF52540">
    <property type="entry name" value="P-loop containing nucleoside triphosphate hydrolases"/>
    <property type="match status" value="1"/>
</dbReference>
<dbReference type="PROSITE" id="PS51419">
    <property type="entry name" value="RAB"/>
    <property type="match status" value="1"/>
</dbReference>
<protein>
    <recommendedName>
        <fullName>Ras-related protein Rab-19</fullName>
        <ecNumber evidence="3">3.6.5.2</ecNumber>
    </recommendedName>
</protein>
<organism>
    <name type="scientific">Xenopus laevis</name>
    <name type="common">African clawed frog</name>
    <dbReference type="NCBI Taxonomy" id="8355"/>
    <lineage>
        <taxon>Eukaryota</taxon>
        <taxon>Metazoa</taxon>
        <taxon>Chordata</taxon>
        <taxon>Craniata</taxon>
        <taxon>Vertebrata</taxon>
        <taxon>Euteleostomi</taxon>
        <taxon>Amphibia</taxon>
        <taxon>Batrachia</taxon>
        <taxon>Anura</taxon>
        <taxon>Pipoidea</taxon>
        <taxon>Pipidae</taxon>
        <taxon>Xenopodinae</taxon>
        <taxon>Xenopus</taxon>
        <taxon>Xenopus</taxon>
    </lineage>
</organism>
<sequence length="213" mass="24074">MPGRGSLEDDPFDFLFKIILIGDSNVGKTCVVHRFQSGIFMDNQQNTIGVDFTVRSLNINGKKVKVQVWDTAGQERFRTITQSYYRSAHGAIIAYDITRRQSFESVPHWIYEAGKYGAANLMLMLMGNKSDLAEKRQILFEEACTLAEKHGLLAVLETSAKESHNVDEVFLLMAKELIARNTFHYHNESPRNSFILDSKPVLAPPEPDKSCLC</sequence>
<comment type="function">
    <text evidence="3">The small GTPases Rab are key regulators of intracellular membrane trafficking, from the formation of transport vesicles to their fusion with membranes. Rabs cycle between an inactive GDP-bound form and an active GTP-bound form that is able to recruit to membranes different set of downstream effectors directly responsible for vesicle formation, movement, tethering and fusion.</text>
</comment>
<comment type="catalytic activity">
    <reaction evidence="3">
        <text>GTP + H2O = GDP + phosphate + H(+)</text>
        <dbReference type="Rhea" id="RHEA:19669"/>
        <dbReference type="ChEBI" id="CHEBI:15377"/>
        <dbReference type="ChEBI" id="CHEBI:15378"/>
        <dbReference type="ChEBI" id="CHEBI:37565"/>
        <dbReference type="ChEBI" id="CHEBI:43474"/>
        <dbReference type="ChEBI" id="CHEBI:58189"/>
        <dbReference type="EC" id="3.6.5.2"/>
    </reaction>
    <physiologicalReaction direction="left-to-right" evidence="3">
        <dbReference type="Rhea" id="RHEA:19670"/>
    </physiologicalReaction>
</comment>
<comment type="cofactor">
    <cofactor evidence="3">
        <name>Mg(2+)</name>
        <dbReference type="ChEBI" id="CHEBI:18420"/>
    </cofactor>
</comment>
<comment type="activity regulation">
    <text evidence="2">Regulated by guanine nucleotide exchange factors (GEFs) which promote the exchange of bound GDP for free GTP. Regulated by GTPase activating proteins (GAPs) which increase the GTP hydrolysis activity. Inhibited by GDP dissociation inhibitors (GDIs).</text>
</comment>
<comment type="subcellular location">
    <subcellularLocation>
        <location evidence="4">Cell membrane</location>
        <topology evidence="4">Lipid-anchor</topology>
        <orientation evidence="4">Cytoplasmic side</orientation>
    </subcellularLocation>
</comment>
<comment type="domain">
    <text evidence="3">Switch 1, switch 2 and the interswitch regions are characteristic of Rab GTPases and mediate the interactions with Rab downstream effectors. The switch regions undergo conformational changes upon nucleotide binding which drives interaction with specific sets of effector proteins, with most effectors only binding to GTP-bound Rab.</text>
</comment>
<comment type="similarity">
    <text evidence="4">Belongs to the small GTPase superfamily. Rab family.</text>
</comment>